<name>RSMJ_AGRFC</name>
<dbReference type="EC" id="2.1.1.242" evidence="1"/>
<dbReference type="EMBL" id="AE007870">
    <property type="protein sequence ID" value="AAK89388.1"/>
    <property type="molecule type" value="Genomic_DNA"/>
</dbReference>
<dbReference type="PIR" id="AC3053">
    <property type="entry name" value="AC3053"/>
</dbReference>
<dbReference type="PIR" id="B98233">
    <property type="entry name" value="B98233"/>
</dbReference>
<dbReference type="RefSeq" id="NP_356603.1">
    <property type="nucleotide sequence ID" value="NC_003063.2"/>
</dbReference>
<dbReference type="RefSeq" id="WP_006313741.1">
    <property type="nucleotide sequence ID" value="NC_003063.2"/>
</dbReference>
<dbReference type="SMR" id="Q8U8Q0"/>
<dbReference type="STRING" id="176299.Atu4040"/>
<dbReference type="EnsemblBacteria" id="AAK89388">
    <property type="protein sequence ID" value="AAK89388"/>
    <property type="gene ID" value="Atu4040"/>
</dbReference>
<dbReference type="GeneID" id="1135914"/>
<dbReference type="KEGG" id="atu:Atu4040"/>
<dbReference type="PATRIC" id="fig|176299.10.peg.3857"/>
<dbReference type="eggNOG" id="COG0500">
    <property type="taxonomic scope" value="Bacteria"/>
</dbReference>
<dbReference type="HOGENOM" id="CLU_076324_0_0_5"/>
<dbReference type="OrthoDB" id="3191794at2"/>
<dbReference type="PhylomeDB" id="Q8U8Q0"/>
<dbReference type="BioCyc" id="AGRO:ATU4040-MONOMER"/>
<dbReference type="Proteomes" id="UP000000813">
    <property type="component" value="Chromosome linear"/>
</dbReference>
<dbReference type="GO" id="GO:0005737">
    <property type="term" value="C:cytoplasm"/>
    <property type="evidence" value="ECO:0007669"/>
    <property type="project" value="UniProtKB-SubCell"/>
</dbReference>
<dbReference type="GO" id="GO:0008990">
    <property type="term" value="F:rRNA (guanine-N2-)-methyltransferase activity"/>
    <property type="evidence" value="ECO:0007669"/>
    <property type="project" value="UniProtKB-UniRule"/>
</dbReference>
<dbReference type="CDD" id="cd02440">
    <property type="entry name" value="AdoMet_MTases"/>
    <property type="match status" value="1"/>
</dbReference>
<dbReference type="Gene3D" id="3.40.50.150">
    <property type="entry name" value="Vaccinia Virus protein VP39"/>
    <property type="match status" value="1"/>
</dbReference>
<dbReference type="HAMAP" id="MF_01523">
    <property type="entry name" value="16SrRNA_methyltr_J"/>
    <property type="match status" value="1"/>
</dbReference>
<dbReference type="InterPro" id="IPR007536">
    <property type="entry name" value="16SrRNA_methylTrfase_J"/>
</dbReference>
<dbReference type="InterPro" id="IPR029063">
    <property type="entry name" value="SAM-dependent_MTases_sf"/>
</dbReference>
<dbReference type="PANTHER" id="PTHR36112">
    <property type="entry name" value="RIBOSOMAL RNA SMALL SUBUNIT METHYLTRANSFERASE J"/>
    <property type="match status" value="1"/>
</dbReference>
<dbReference type="PANTHER" id="PTHR36112:SF1">
    <property type="entry name" value="RIBOSOMAL RNA SMALL SUBUNIT METHYLTRANSFERASE J"/>
    <property type="match status" value="1"/>
</dbReference>
<dbReference type="Pfam" id="PF04445">
    <property type="entry name" value="SAM_MT"/>
    <property type="match status" value="1"/>
</dbReference>
<dbReference type="SUPFAM" id="SSF53335">
    <property type="entry name" value="S-adenosyl-L-methionine-dependent methyltransferases"/>
    <property type="match status" value="1"/>
</dbReference>
<protein>
    <recommendedName>
        <fullName evidence="1">Ribosomal RNA small subunit methyltransferase J</fullName>
        <ecNumber evidence="1">2.1.1.242</ecNumber>
    </recommendedName>
    <alternativeName>
        <fullName evidence="1">16S rRNA m2G1516 methyltransferase</fullName>
    </alternativeName>
    <alternativeName>
        <fullName evidence="1">rRNA (guanine-N(2)-)-methyltransferase</fullName>
    </alternativeName>
</protein>
<keyword id="KW-0963">Cytoplasm</keyword>
<keyword id="KW-0489">Methyltransferase</keyword>
<keyword id="KW-1185">Reference proteome</keyword>
<keyword id="KW-0698">rRNA processing</keyword>
<keyword id="KW-0949">S-adenosyl-L-methionine</keyword>
<keyword id="KW-0808">Transferase</keyword>
<reference key="1">
    <citation type="journal article" date="2001" name="Science">
        <title>The genome of the natural genetic engineer Agrobacterium tumefaciens C58.</title>
        <authorList>
            <person name="Wood D.W."/>
            <person name="Setubal J.C."/>
            <person name="Kaul R."/>
            <person name="Monks D.E."/>
            <person name="Kitajima J.P."/>
            <person name="Okura V.K."/>
            <person name="Zhou Y."/>
            <person name="Chen L."/>
            <person name="Wood G.E."/>
            <person name="Almeida N.F. Jr."/>
            <person name="Woo L."/>
            <person name="Chen Y."/>
            <person name="Paulsen I.T."/>
            <person name="Eisen J.A."/>
            <person name="Karp P.D."/>
            <person name="Bovee D. Sr."/>
            <person name="Chapman P."/>
            <person name="Clendenning J."/>
            <person name="Deatherage G."/>
            <person name="Gillet W."/>
            <person name="Grant C."/>
            <person name="Kutyavin T."/>
            <person name="Levy R."/>
            <person name="Li M.-J."/>
            <person name="McClelland E."/>
            <person name="Palmieri A."/>
            <person name="Raymond C."/>
            <person name="Rouse G."/>
            <person name="Saenphimmachak C."/>
            <person name="Wu Z."/>
            <person name="Romero P."/>
            <person name="Gordon D."/>
            <person name="Zhang S."/>
            <person name="Yoo H."/>
            <person name="Tao Y."/>
            <person name="Biddle P."/>
            <person name="Jung M."/>
            <person name="Krespan W."/>
            <person name="Perry M."/>
            <person name="Gordon-Kamm B."/>
            <person name="Liao L."/>
            <person name="Kim S."/>
            <person name="Hendrick C."/>
            <person name="Zhao Z.-Y."/>
            <person name="Dolan M."/>
            <person name="Chumley F."/>
            <person name="Tingey S.V."/>
            <person name="Tomb J.-F."/>
            <person name="Gordon M.P."/>
            <person name="Olson M.V."/>
            <person name="Nester E.W."/>
        </authorList>
    </citation>
    <scope>NUCLEOTIDE SEQUENCE [LARGE SCALE GENOMIC DNA]</scope>
    <source>
        <strain>C58 / ATCC 33970</strain>
    </source>
</reference>
<reference key="2">
    <citation type="journal article" date="2001" name="Science">
        <title>Genome sequence of the plant pathogen and biotechnology agent Agrobacterium tumefaciens C58.</title>
        <authorList>
            <person name="Goodner B."/>
            <person name="Hinkle G."/>
            <person name="Gattung S."/>
            <person name="Miller N."/>
            <person name="Blanchard M."/>
            <person name="Qurollo B."/>
            <person name="Goldman B.S."/>
            <person name="Cao Y."/>
            <person name="Askenazi M."/>
            <person name="Halling C."/>
            <person name="Mullin L."/>
            <person name="Houmiel K."/>
            <person name="Gordon J."/>
            <person name="Vaudin M."/>
            <person name="Iartchouk O."/>
            <person name="Epp A."/>
            <person name="Liu F."/>
            <person name="Wollam C."/>
            <person name="Allinger M."/>
            <person name="Doughty D."/>
            <person name="Scott C."/>
            <person name="Lappas C."/>
            <person name="Markelz B."/>
            <person name="Flanagan C."/>
            <person name="Crowell C."/>
            <person name="Gurson J."/>
            <person name="Lomo C."/>
            <person name="Sear C."/>
            <person name="Strub G."/>
            <person name="Cielo C."/>
            <person name="Slater S."/>
        </authorList>
    </citation>
    <scope>NUCLEOTIDE SEQUENCE [LARGE SCALE GENOMIC DNA]</scope>
    <source>
        <strain>C58 / ATCC 33970</strain>
    </source>
</reference>
<evidence type="ECO:0000255" key="1">
    <source>
        <dbReference type="HAMAP-Rule" id="MF_01523"/>
    </source>
</evidence>
<organism>
    <name type="scientific">Agrobacterium fabrum (strain C58 / ATCC 33970)</name>
    <name type="common">Agrobacterium tumefaciens (strain C58)</name>
    <dbReference type="NCBI Taxonomy" id="176299"/>
    <lineage>
        <taxon>Bacteria</taxon>
        <taxon>Pseudomonadati</taxon>
        <taxon>Pseudomonadota</taxon>
        <taxon>Alphaproteobacteria</taxon>
        <taxon>Hyphomicrobiales</taxon>
        <taxon>Rhizobiaceae</taxon>
        <taxon>Rhizobium/Agrobacterium group</taxon>
        <taxon>Agrobacterium</taxon>
        <taxon>Agrobacterium tumefaciens complex</taxon>
    </lineage>
</organism>
<comment type="function">
    <text evidence="1">Specifically methylates the guanosine in position 1516 of 16S rRNA.</text>
</comment>
<comment type="catalytic activity">
    <reaction evidence="1">
        <text>guanosine(1516) in 16S rRNA + S-adenosyl-L-methionine = N(2)-methylguanosine(1516) in 16S rRNA + S-adenosyl-L-homocysteine + H(+)</text>
        <dbReference type="Rhea" id="RHEA:43220"/>
        <dbReference type="Rhea" id="RHEA-COMP:10412"/>
        <dbReference type="Rhea" id="RHEA-COMP:10413"/>
        <dbReference type="ChEBI" id="CHEBI:15378"/>
        <dbReference type="ChEBI" id="CHEBI:57856"/>
        <dbReference type="ChEBI" id="CHEBI:59789"/>
        <dbReference type="ChEBI" id="CHEBI:74269"/>
        <dbReference type="ChEBI" id="CHEBI:74481"/>
        <dbReference type="EC" id="2.1.1.242"/>
    </reaction>
</comment>
<comment type="subcellular location">
    <subcellularLocation>
        <location evidence="1">Cytoplasm</location>
    </subcellularLocation>
</comment>
<comment type="similarity">
    <text evidence="1">Belongs to the methyltransferase superfamily. RsmJ family.</text>
</comment>
<gene>
    <name evidence="1" type="primary">rsmJ</name>
    <name type="ordered locus">Atu4040</name>
    <name type="ORF">AGR_L_1626</name>
</gene>
<accession>Q8U8Q0</accession>
<accession>Q7CTX4</accession>
<sequence>MKEQNESFVVDFVGGAVGHRFRSGEGRGQALPKAAGFTKGRTPKIVDATAGLGRDAFLLASLGAEVTLIERSPGMHAHLADGISRALEAGGAYAEAASRMTLLQGDSRQLLKELSPEVVVIDPMHPPRHNTALVKKEMRVLRELVGSDPDQVELMEVALAHATKRVVLKWPLRADPMPGIRKPSHQIIGKNTRYDVFMIFGNSLDQQE</sequence>
<feature type="chain" id="PRO_0000212057" description="Ribosomal RNA small subunit methyltransferase J">
    <location>
        <begin position="1"/>
        <end position="208"/>
    </location>
</feature>
<feature type="binding site" evidence="1">
    <location>
        <begin position="54"/>
        <end position="55"/>
    </location>
    <ligand>
        <name>S-adenosyl-L-methionine</name>
        <dbReference type="ChEBI" id="CHEBI:59789"/>
    </ligand>
</feature>
<feature type="binding site" evidence="1">
    <location>
        <begin position="70"/>
        <end position="71"/>
    </location>
    <ligand>
        <name>S-adenosyl-L-methionine</name>
        <dbReference type="ChEBI" id="CHEBI:59789"/>
    </ligand>
</feature>
<feature type="binding site" evidence="1">
    <location>
        <position position="122"/>
    </location>
    <ligand>
        <name>S-adenosyl-L-methionine</name>
        <dbReference type="ChEBI" id="CHEBI:59789"/>
    </ligand>
</feature>
<proteinExistence type="inferred from homology"/>